<reference key="1">
    <citation type="journal article" date="2008" name="J. Bacteriol.">
        <title>Insights into the environmental resistance gene pool from the genome sequence of the multidrug-resistant environmental isolate Escherichia coli SMS-3-5.</title>
        <authorList>
            <person name="Fricke W.F."/>
            <person name="Wright M.S."/>
            <person name="Lindell A.H."/>
            <person name="Harkins D.M."/>
            <person name="Baker-Austin C."/>
            <person name="Ravel J."/>
            <person name="Stepanauskas R."/>
        </authorList>
    </citation>
    <scope>NUCLEOTIDE SEQUENCE [LARGE SCALE GENOMIC DNA]</scope>
    <source>
        <strain>SMS-3-5 / SECEC</strain>
    </source>
</reference>
<name>ABDH_ECOSM</name>
<sequence length="474" mass="50830">MQHKLLINGELVSGEGEKQPVYNPATGDVLLEIAEASAEQVDAAVRAADAAFAEWGQTTPKARAECLLKLADVIEENGQVFAELESRNCGKPLHSAFNDEIPAIVDVFRFFAGAARCLNGLAAGEYLEGHTSMIRRDPLGVVASIAPWNYPLMMAAWKLAPALAAGNCVVLKPSEITPLTALKLAELAKDIFPAGVINVLFGRGKTVGDPLTGHPKVRMVSLTGSIATGEHIISHTAPSIKRTHMELGGKAPVIVFDDADIEAVVEGVRTFGYYNAGQDCTAACRIYAQKGIYDTLVEKLGAAVATLKSGAPDDDSTELGPLSSLAHLERVSKAVEEAKATGHIKVITGGEKRKGNGYYYAPTLLAGALQDDAIVQKEVFGPVVSVTLFDNEEQVVNWANDSQYGLASSVWTKDVGRAHRVSARLQYGCTWVNTHFMLVSEMPHGGQKLSGYGKDMSLYGLEDYTVVRHVMVKH</sequence>
<feature type="chain" id="PRO_1000140274" description="Gamma-aminobutyraldehyde dehydrogenase">
    <location>
        <begin position="1"/>
        <end position="474"/>
    </location>
</feature>
<feature type="active site" evidence="1">
    <location>
        <position position="246"/>
    </location>
</feature>
<feature type="active site" description="Nucleophile" evidence="1">
    <location>
        <position position="280"/>
    </location>
</feature>
<feature type="binding site" evidence="1">
    <location>
        <begin position="146"/>
        <end position="148"/>
    </location>
    <ligand>
        <name>NAD(+)</name>
        <dbReference type="ChEBI" id="CHEBI:57540"/>
    </ligand>
</feature>
<feature type="binding site" evidence="1">
    <location>
        <begin position="172"/>
        <end position="175"/>
    </location>
    <ligand>
        <name>NAD(+)</name>
        <dbReference type="ChEBI" id="CHEBI:57540"/>
    </ligand>
</feature>
<feature type="binding site" evidence="1">
    <location>
        <position position="209"/>
    </location>
    <ligand>
        <name>NAD(+)</name>
        <dbReference type="ChEBI" id="CHEBI:57540"/>
    </ligand>
</feature>
<feature type="binding site" evidence="1">
    <location>
        <begin position="225"/>
        <end position="228"/>
    </location>
    <ligand>
        <name>NAD(+)</name>
        <dbReference type="ChEBI" id="CHEBI:57540"/>
    </ligand>
</feature>
<feature type="binding site" evidence="1">
    <location>
        <position position="280"/>
    </location>
    <ligand>
        <name>NAD(+)</name>
        <dbReference type="ChEBI" id="CHEBI:57540"/>
    </ligand>
</feature>
<protein>
    <recommendedName>
        <fullName evidence="1">Gamma-aminobutyraldehyde dehydrogenase</fullName>
        <shortName evidence="1">ABALDH</shortName>
        <ecNumber evidence="1">1.2.1.19</ecNumber>
    </recommendedName>
    <alternativeName>
        <fullName evidence="1">1-pyrroline dehydrogenase</fullName>
    </alternativeName>
    <alternativeName>
        <fullName evidence="1">4-aminobutanal dehydrogenase</fullName>
    </alternativeName>
    <alternativeName>
        <fullName evidence="1">5-aminopentanal dehydrogenase</fullName>
        <ecNumber evidence="1">1.2.1.-</ecNumber>
    </alternativeName>
</protein>
<proteinExistence type="inferred from homology"/>
<gene>
    <name evidence="1" type="primary">patD</name>
    <name type="ordered locus">EcSMS35_1729</name>
</gene>
<dbReference type="EC" id="1.2.1.19" evidence="1"/>
<dbReference type="EC" id="1.2.1.-" evidence="1"/>
<dbReference type="EMBL" id="CP000970">
    <property type="protein sequence ID" value="ACB17411.1"/>
    <property type="molecule type" value="Genomic_DNA"/>
</dbReference>
<dbReference type="RefSeq" id="WP_001163861.1">
    <property type="nucleotide sequence ID" value="NC_010498.1"/>
</dbReference>
<dbReference type="SMR" id="B1LFH3"/>
<dbReference type="KEGG" id="ecm:EcSMS35_1729"/>
<dbReference type="HOGENOM" id="CLU_005391_1_0_6"/>
<dbReference type="UniPathway" id="UPA00188">
    <property type="reaction ID" value="UER00292"/>
</dbReference>
<dbReference type="Proteomes" id="UP000007011">
    <property type="component" value="Chromosome"/>
</dbReference>
<dbReference type="GO" id="GO:0019145">
    <property type="term" value="F:aminobutyraldehyde dehydrogenase (NAD+) activity"/>
    <property type="evidence" value="ECO:0007669"/>
    <property type="project" value="UniProtKB-UniRule"/>
</dbReference>
<dbReference type="GO" id="GO:0051287">
    <property type="term" value="F:NAD binding"/>
    <property type="evidence" value="ECO:0007669"/>
    <property type="project" value="UniProtKB-UniRule"/>
</dbReference>
<dbReference type="GO" id="GO:0019477">
    <property type="term" value="P:L-lysine catabolic process"/>
    <property type="evidence" value="ECO:0007669"/>
    <property type="project" value="UniProtKB-UniRule"/>
</dbReference>
<dbReference type="GO" id="GO:0009447">
    <property type="term" value="P:putrescine catabolic process"/>
    <property type="evidence" value="ECO:0007669"/>
    <property type="project" value="UniProtKB-UniRule"/>
</dbReference>
<dbReference type="CDD" id="cd07092">
    <property type="entry name" value="ALDH_ABALDH-YdcW"/>
    <property type="match status" value="1"/>
</dbReference>
<dbReference type="FunFam" id="3.40.605.10:FF:000001">
    <property type="entry name" value="Aldehyde dehydrogenase 1"/>
    <property type="match status" value="1"/>
</dbReference>
<dbReference type="FunFam" id="3.40.309.10:FF:000010">
    <property type="entry name" value="Gamma-aminobutyraldehyde dehydrogenase"/>
    <property type="match status" value="1"/>
</dbReference>
<dbReference type="Gene3D" id="3.40.605.10">
    <property type="entry name" value="Aldehyde Dehydrogenase, Chain A, domain 1"/>
    <property type="match status" value="1"/>
</dbReference>
<dbReference type="Gene3D" id="3.40.309.10">
    <property type="entry name" value="Aldehyde Dehydrogenase, Chain A, domain 2"/>
    <property type="match status" value="1"/>
</dbReference>
<dbReference type="HAMAP" id="MF_01275">
    <property type="entry name" value="Aldedh_Prr"/>
    <property type="match status" value="1"/>
</dbReference>
<dbReference type="InterPro" id="IPR016161">
    <property type="entry name" value="Ald_DH/histidinol_DH"/>
</dbReference>
<dbReference type="InterPro" id="IPR016163">
    <property type="entry name" value="Ald_DH_C"/>
</dbReference>
<dbReference type="InterPro" id="IPR029510">
    <property type="entry name" value="Ald_DH_CS_GLU"/>
</dbReference>
<dbReference type="InterPro" id="IPR016162">
    <property type="entry name" value="Ald_DH_N"/>
</dbReference>
<dbReference type="InterPro" id="IPR015590">
    <property type="entry name" value="Aldehyde_DH_dom"/>
</dbReference>
<dbReference type="InterPro" id="IPR015657">
    <property type="entry name" value="Aminobutyraldehyde_DH"/>
</dbReference>
<dbReference type="InterPro" id="IPR017749">
    <property type="entry name" value="PatD"/>
</dbReference>
<dbReference type="NCBIfam" id="TIGR03374">
    <property type="entry name" value="ABALDH"/>
    <property type="match status" value="1"/>
</dbReference>
<dbReference type="NCBIfam" id="NF010000">
    <property type="entry name" value="PRK13473.1"/>
    <property type="match status" value="1"/>
</dbReference>
<dbReference type="PANTHER" id="PTHR11699">
    <property type="entry name" value="ALDEHYDE DEHYDROGENASE-RELATED"/>
    <property type="match status" value="1"/>
</dbReference>
<dbReference type="Pfam" id="PF00171">
    <property type="entry name" value="Aldedh"/>
    <property type="match status" value="1"/>
</dbReference>
<dbReference type="SUPFAM" id="SSF53720">
    <property type="entry name" value="ALDH-like"/>
    <property type="match status" value="1"/>
</dbReference>
<dbReference type="PROSITE" id="PS00687">
    <property type="entry name" value="ALDEHYDE_DEHYDR_GLU"/>
    <property type="match status" value="1"/>
</dbReference>
<evidence type="ECO:0000255" key="1">
    <source>
        <dbReference type="HAMAP-Rule" id="MF_01275"/>
    </source>
</evidence>
<keyword id="KW-0520">NAD</keyword>
<keyword id="KW-0560">Oxidoreductase</keyword>
<comment type="function">
    <text evidence="1">Catalyzes the oxidation 4-aminobutanal (gamma-aminobutyraldehyde) to 4-aminobutanoate (gamma-aminobutyrate or GABA). This is the second step in one of two pathways for putrescine degradation, where putrescine is converted into 4-aminobutanoate via 4-aminobutanal. Also functions as a 5-aminopentanal dehydrogenase in a a L-lysine degradation pathway to succinate that proceeds via cadaverine, glutarate and L-2-hydroxyglutarate.</text>
</comment>
<comment type="catalytic activity">
    <reaction evidence="1">
        <text>4-aminobutanal + NAD(+) + H2O = 4-aminobutanoate + NADH + 2 H(+)</text>
        <dbReference type="Rhea" id="RHEA:19105"/>
        <dbReference type="ChEBI" id="CHEBI:15377"/>
        <dbReference type="ChEBI" id="CHEBI:15378"/>
        <dbReference type="ChEBI" id="CHEBI:57540"/>
        <dbReference type="ChEBI" id="CHEBI:57945"/>
        <dbReference type="ChEBI" id="CHEBI:58264"/>
        <dbReference type="ChEBI" id="CHEBI:59888"/>
        <dbReference type="EC" id="1.2.1.19"/>
    </reaction>
    <physiologicalReaction direction="left-to-right" evidence="1">
        <dbReference type="Rhea" id="RHEA:19106"/>
    </physiologicalReaction>
</comment>
<comment type="catalytic activity">
    <reaction evidence="1">
        <text>5-aminopentanal + NAD(+) + H2O = 5-aminopentanoate + NADH + 2 H(+)</text>
        <dbReference type="Rhea" id="RHEA:61632"/>
        <dbReference type="ChEBI" id="CHEBI:15377"/>
        <dbReference type="ChEBI" id="CHEBI:15378"/>
        <dbReference type="ChEBI" id="CHEBI:57540"/>
        <dbReference type="ChEBI" id="CHEBI:57945"/>
        <dbReference type="ChEBI" id="CHEBI:144896"/>
        <dbReference type="ChEBI" id="CHEBI:356010"/>
    </reaction>
    <physiologicalReaction direction="left-to-right" evidence="1">
        <dbReference type="Rhea" id="RHEA:61633"/>
    </physiologicalReaction>
</comment>
<comment type="pathway">
    <text evidence="1">Amine and polyamine degradation; putrescine degradation; 4-aminobutanoate from 4-aminobutanal: step 1/1.</text>
</comment>
<comment type="pathway">
    <text evidence="1">Amino-acid degradation.</text>
</comment>
<comment type="subunit">
    <text evidence="1">Homotetramer.</text>
</comment>
<comment type="miscellaneous">
    <text evidence="1">4-aminobutanal can spontaneously cyclize to 1-pyrroline, and 5-aminopentanal to 1-piperideine.</text>
</comment>
<comment type="similarity">
    <text evidence="1">Belongs to the aldehyde dehydrogenase family. Gamma-aminobutyraldehyde dehydrogenase subfamily.</text>
</comment>
<organism>
    <name type="scientific">Escherichia coli (strain SMS-3-5 / SECEC)</name>
    <dbReference type="NCBI Taxonomy" id="439855"/>
    <lineage>
        <taxon>Bacteria</taxon>
        <taxon>Pseudomonadati</taxon>
        <taxon>Pseudomonadota</taxon>
        <taxon>Gammaproteobacteria</taxon>
        <taxon>Enterobacterales</taxon>
        <taxon>Enterobacteriaceae</taxon>
        <taxon>Escherichia</taxon>
    </lineage>
</organism>
<accession>B1LFH3</accession>